<protein>
    <recommendedName>
        <fullName evidence="1">Chaperonin GroEL 2</fullName>
        <ecNumber evidence="1">5.6.1.7</ecNumber>
    </recommendedName>
    <alternativeName>
        <fullName evidence="1">60 kDa chaperonin 2</fullName>
    </alternativeName>
    <alternativeName>
        <fullName evidence="1">Chaperonin-60 2</fullName>
        <shortName evidence="1">Cpn60 2</shortName>
    </alternativeName>
</protein>
<gene>
    <name evidence="1" type="primary">groEL2</name>
    <name evidence="1" type="synonym">groL2</name>
    <name type="ordered locus">Rfer_3009</name>
</gene>
<organism>
    <name type="scientific">Albidiferax ferrireducens (strain ATCC BAA-621 / DSM 15236 / T118)</name>
    <name type="common">Rhodoferax ferrireducens</name>
    <dbReference type="NCBI Taxonomy" id="338969"/>
    <lineage>
        <taxon>Bacteria</taxon>
        <taxon>Pseudomonadati</taxon>
        <taxon>Pseudomonadota</taxon>
        <taxon>Betaproteobacteria</taxon>
        <taxon>Burkholderiales</taxon>
        <taxon>Comamonadaceae</taxon>
        <taxon>Rhodoferax</taxon>
    </lineage>
</organism>
<name>CH602_ALBFT</name>
<proteinExistence type="inferred from homology"/>
<sequence>MNPKQLIFHDDARDKIRRGVDTLAQAVKVTLGPRGRTVILERDFGSPQIVNSGVLVAKSIELEDRFENMGAQLLREVAARTSEMAGDGTTTATVLAHSMILEGLRYLAGGMNPMDLKRGIEIAIDAVVAELKQLSRPCASSQEIAHVAAISANNDRSIGDLLASAIDKVGREGAISIEDGSGLVSVLDVVEGLQFDRGFLSPYFINNAERQSAVLEDVAILLCEGRLSSLKDLLPLLEEIVKEGRPLLVIAEEVDNDSLAALVINTIRGTLKTCAVKAPGFGDRRKAMVQDIAVLTGGSVVSDEVGLTLGKVKLSDLGRATRAEITKETTTLIGGAGQPKAIKERIATIRKERELASSDYDRDKLDERAAKLAGGVALIKVGAATETELKERKIRVEDALHATRAAVEEGIVPGGGVALLRARRALLTLTGSTLDETSGIRLVARSLEEPLRCIVSNAGDEPSVILNRVDESPDPAFGYNAATRTYGDLLQMGVIDPAKVTRLALQNAASIASLILGTACLIATAPKPLPEEGAHGPGGETPMF</sequence>
<dbReference type="EC" id="5.6.1.7" evidence="1"/>
<dbReference type="EMBL" id="CP000267">
    <property type="protein sequence ID" value="ABD70720.1"/>
    <property type="molecule type" value="Genomic_DNA"/>
</dbReference>
<dbReference type="RefSeq" id="WP_011465286.1">
    <property type="nucleotide sequence ID" value="NC_007908.1"/>
</dbReference>
<dbReference type="SMR" id="Q21U33"/>
<dbReference type="STRING" id="338969.Rfer_3009"/>
<dbReference type="KEGG" id="rfr:Rfer_3009"/>
<dbReference type="eggNOG" id="COG0459">
    <property type="taxonomic scope" value="Bacteria"/>
</dbReference>
<dbReference type="HOGENOM" id="CLU_016503_3_0_4"/>
<dbReference type="OrthoDB" id="9766614at2"/>
<dbReference type="Proteomes" id="UP000008332">
    <property type="component" value="Chromosome"/>
</dbReference>
<dbReference type="GO" id="GO:0005737">
    <property type="term" value="C:cytoplasm"/>
    <property type="evidence" value="ECO:0007669"/>
    <property type="project" value="UniProtKB-SubCell"/>
</dbReference>
<dbReference type="GO" id="GO:0005524">
    <property type="term" value="F:ATP binding"/>
    <property type="evidence" value="ECO:0007669"/>
    <property type="project" value="UniProtKB-UniRule"/>
</dbReference>
<dbReference type="GO" id="GO:0140662">
    <property type="term" value="F:ATP-dependent protein folding chaperone"/>
    <property type="evidence" value="ECO:0007669"/>
    <property type="project" value="InterPro"/>
</dbReference>
<dbReference type="GO" id="GO:0016853">
    <property type="term" value="F:isomerase activity"/>
    <property type="evidence" value="ECO:0007669"/>
    <property type="project" value="UniProtKB-KW"/>
</dbReference>
<dbReference type="GO" id="GO:0051082">
    <property type="term" value="F:unfolded protein binding"/>
    <property type="evidence" value="ECO:0007669"/>
    <property type="project" value="UniProtKB-UniRule"/>
</dbReference>
<dbReference type="GO" id="GO:0042026">
    <property type="term" value="P:protein refolding"/>
    <property type="evidence" value="ECO:0007669"/>
    <property type="project" value="UniProtKB-UniRule"/>
</dbReference>
<dbReference type="CDD" id="cd03344">
    <property type="entry name" value="GroEL"/>
    <property type="match status" value="1"/>
</dbReference>
<dbReference type="FunFam" id="3.50.7.10:FF:000001">
    <property type="entry name" value="60 kDa chaperonin"/>
    <property type="match status" value="1"/>
</dbReference>
<dbReference type="Gene3D" id="3.50.7.10">
    <property type="entry name" value="GroEL"/>
    <property type="match status" value="1"/>
</dbReference>
<dbReference type="Gene3D" id="1.10.560.10">
    <property type="entry name" value="GroEL-like equatorial domain"/>
    <property type="match status" value="1"/>
</dbReference>
<dbReference type="Gene3D" id="3.30.260.10">
    <property type="entry name" value="TCP-1-like chaperonin intermediate domain"/>
    <property type="match status" value="1"/>
</dbReference>
<dbReference type="HAMAP" id="MF_00600">
    <property type="entry name" value="CH60"/>
    <property type="match status" value="1"/>
</dbReference>
<dbReference type="InterPro" id="IPR018370">
    <property type="entry name" value="Chaperonin_Cpn60_CS"/>
</dbReference>
<dbReference type="InterPro" id="IPR001844">
    <property type="entry name" value="Cpn60/GroEL"/>
</dbReference>
<dbReference type="InterPro" id="IPR002423">
    <property type="entry name" value="Cpn60/GroEL/TCP-1"/>
</dbReference>
<dbReference type="InterPro" id="IPR027409">
    <property type="entry name" value="GroEL-like_apical_dom_sf"/>
</dbReference>
<dbReference type="InterPro" id="IPR027413">
    <property type="entry name" value="GROEL-like_equatorial_sf"/>
</dbReference>
<dbReference type="InterPro" id="IPR027410">
    <property type="entry name" value="TCP-1-like_intermed_sf"/>
</dbReference>
<dbReference type="NCBIfam" id="TIGR02348">
    <property type="entry name" value="GroEL"/>
    <property type="match status" value="1"/>
</dbReference>
<dbReference type="NCBIfam" id="NF000592">
    <property type="entry name" value="PRK00013.1"/>
    <property type="match status" value="1"/>
</dbReference>
<dbReference type="NCBIfam" id="NF009487">
    <property type="entry name" value="PRK12849.1"/>
    <property type="match status" value="1"/>
</dbReference>
<dbReference type="NCBIfam" id="NF009488">
    <property type="entry name" value="PRK12850.1"/>
    <property type="match status" value="1"/>
</dbReference>
<dbReference type="NCBIfam" id="NF009489">
    <property type="entry name" value="PRK12851.1"/>
    <property type="match status" value="1"/>
</dbReference>
<dbReference type="PANTHER" id="PTHR45633">
    <property type="entry name" value="60 KDA HEAT SHOCK PROTEIN, MITOCHONDRIAL"/>
    <property type="match status" value="1"/>
</dbReference>
<dbReference type="Pfam" id="PF00118">
    <property type="entry name" value="Cpn60_TCP1"/>
    <property type="match status" value="1"/>
</dbReference>
<dbReference type="PRINTS" id="PR00298">
    <property type="entry name" value="CHAPERONIN60"/>
</dbReference>
<dbReference type="SUPFAM" id="SSF52029">
    <property type="entry name" value="GroEL apical domain-like"/>
    <property type="match status" value="1"/>
</dbReference>
<dbReference type="SUPFAM" id="SSF48592">
    <property type="entry name" value="GroEL equatorial domain-like"/>
    <property type="match status" value="1"/>
</dbReference>
<dbReference type="SUPFAM" id="SSF54849">
    <property type="entry name" value="GroEL-intermediate domain like"/>
    <property type="match status" value="2"/>
</dbReference>
<dbReference type="PROSITE" id="PS00296">
    <property type="entry name" value="CHAPERONINS_CPN60"/>
    <property type="match status" value="1"/>
</dbReference>
<accession>Q21U33</accession>
<reference key="1">
    <citation type="submission" date="2006-02" db="EMBL/GenBank/DDBJ databases">
        <title>Complete sequence of chromosome of Rhodoferax ferrireducens DSM 15236.</title>
        <authorList>
            <person name="Copeland A."/>
            <person name="Lucas S."/>
            <person name="Lapidus A."/>
            <person name="Barry K."/>
            <person name="Detter J.C."/>
            <person name="Glavina del Rio T."/>
            <person name="Hammon N."/>
            <person name="Israni S."/>
            <person name="Pitluck S."/>
            <person name="Brettin T."/>
            <person name="Bruce D."/>
            <person name="Han C."/>
            <person name="Tapia R."/>
            <person name="Gilna P."/>
            <person name="Kiss H."/>
            <person name="Schmutz J."/>
            <person name="Larimer F."/>
            <person name="Land M."/>
            <person name="Kyrpides N."/>
            <person name="Ivanova N."/>
            <person name="Richardson P."/>
        </authorList>
    </citation>
    <scope>NUCLEOTIDE SEQUENCE [LARGE SCALE GENOMIC DNA]</scope>
    <source>
        <strain>ATCC BAA-621 / DSM 15236 / T118</strain>
    </source>
</reference>
<feature type="chain" id="PRO_0000256969" description="Chaperonin GroEL 2">
    <location>
        <begin position="1"/>
        <end position="544"/>
    </location>
</feature>
<feature type="binding site" evidence="1">
    <location>
        <begin position="30"/>
        <end position="33"/>
    </location>
    <ligand>
        <name>ATP</name>
        <dbReference type="ChEBI" id="CHEBI:30616"/>
    </ligand>
</feature>
<feature type="binding site" evidence="1">
    <location>
        <begin position="87"/>
        <end position="91"/>
    </location>
    <ligand>
        <name>ATP</name>
        <dbReference type="ChEBI" id="CHEBI:30616"/>
    </ligand>
</feature>
<feature type="binding site" evidence="1">
    <location>
        <position position="415"/>
    </location>
    <ligand>
        <name>ATP</name>
        <dbReference type="ChEBI" id="CHEBI:30616"/>
    </ligand>
</feature>
<feature type="binding site" evidence="1">
    <location>
        <begin position="480"/>
        <end position="482"/>
    </location>
    <ligand>
        <name>ATP</name>
        <dbReference type="ChEBI" id="CHEBI:30616"/>
    </ligand>
</feature>
<feature type="binding site" evidence="1">
    <location>
        <position position="496"/>
    </location>
    <ligand>
        <name>ATP</name>
        <dbReference type="ChEBI" id="CHEBI:30616"/>
    </ligand>
</feature>
<evidence type="ECO:0000255" key="1">
    <source>
        <dbReference type="HAMAP-Rule" id="MF_00600"/>
    </source>
</evidence>
<keyword id="KW-0067">ATP-binding</keyword>
<keyword id="KW-0143">Chaperone</keyword>
<keyword id="KW-0963">Cytoplasm</keyword>
<keyword id="KW-0413">Isomerase</keyword>
<keyword id="KW-0547">Nucleotide-binding</keyword>
<keyword id="KW-1185">Reference proteome</keyword>
<comment type="function">
    <text evidence="1">Together with its co-chaperonin GroES, plays an essential role in assisting protein folding. The GroEL-GroES system forms a nano-cage that allows encapsulation of the non-native substrate proteins and provides a physical environment optimized to promote and accelerate protein folding.</text>
</comment>
<comment type="catalytic activity">
    <reaction evidence="1">
        <text>ATP + H2O + a folded polypeptide = ADP + phosphate + an unfolded polypeptide.</text>
        <dbReference type="EC" id="5.6.1.7"/>
    </reaction>
</comment>
<comment type="subunit">
    <text evidence="1">Forms a cylinder of 14 subunits composed of two heptameric rings stacked back-to-back. Interacts with the co-chaperonin GroES.</text>
</comment>
<comment type="subcellular location">
    <subcellularLocation>
        <location evidence="1">Cytoplasm</location>
    </subcellularLocation>
</comment>
<comment type="similarity">
    <text evidence="1">Belongs to the chaperonin (HSP60) family.</text>
</comment>